<feature type="initiator methionine" description="Removed" evidence="4">
    <location>
        <position position="1"/>
    </location>
</feature>
<feature type="chain" id="PRO_0000156479" description="Polyamine aminopropyltransferase">
    <location>
        <begin position="2"/>
        <end position="288"/>
    </location>
</feature>
<feature type="domain" description="PABS" evidence="1">
    <location>
        <begin position="9"/>
        <end position="238"/>
    </location>
</feature>
<feature type="active site" description="Proton acceptor" evidence="1 11">
    <location>
        <position position="158"/>
    </location>
</feature>
<feature type="binding site" evidence="1">
    <location>
        <position position="33"/>
    </location>
    <ligand>
        <name>S-methyl-5'-thioadenosine</name>
        <dbReference type="ChEBI" id="CHEBI:17509"/>
    </ligand>
</feature>
<feature type="binding site" evidence="1">
    <location>
        <position position="64"/>
    </location>
    <ligand>
        <name>spermidine</name>
        <dbReference type="ChEBI" id="CHEBI:57834"/>
    </ligand>
</feature>
<feature type="binding site" evidence="1">
    <location>
        <position position="88"/>
    </location>
    <ligand>
        <name>spermidine</name>
        <dbReference type="ChEBI" id="CHEBI:57834"/>
    </ligand>
</feature>
<feature type="binding site" evidence="1">
    <location>
        <position position="108"/>
    </location>
    <ligand>
        <name>S-methyl-5'-thioadenosine</name>
        <dbReference type="ChEBI" id="CHEBI:17509"/>
    </ligand>
</feature>
<feature type="binding site" evidence="1">
    <location>
        <begin position="140"/>
        <end position="141"/>
    </location>
    <ligand>
        <name>S-methyl-5'-thioadenosine</name>
        <dbReference type="ChEBI" id="CHEBI:17509"/>
    </ligand>
</feature>
<feature type="binding site" evidence="1">
    <location>
        <begin position="158"/>
        <end position="161"/>
    </location>
    <ligand>
        <name>spermidine</name>
        <dbReference type="ChEBI" id="CHEBI:57834"/>
    </ligand>
</feature>
<feature type="binding site" evidence="1">
    <location>
        <position position="165"/>
    </location>
    <ligand>
        <name>S-methyl-5'-thioadenosine</name>
        <dbReference type="ChEBI" id="CHEBI:17509"/>
    </ligand>
</feature>
<feature type="mutagenesis site" description="Completely inactive." evidence="3">
    <original>D</original>
    <variation>A</variation>
    <location>
        <position position="158"/>
    </location>
</feature>
<feature type="mutagenesis site" description="Reduction of 23% of the aminopropyltransferase activity." evidence="3">
    <original>C</original>
    <variation>A</variation>
    <location>
        <position position="159"/>
    </location>
</feature>
<feature type="mutagenesis site" description="No influence on aminopropyltransferase activity." evidence="3">
    <original>C</original>
    <variation>S</variation>
    <location>
        <position position="159"/>
    </location>
</feature>
<feature type="mutagenesis site" description="Reduction of aminopropyltransferase activity." evidence="3">
    <original>T</original>
    <variation>A</variation>
    <location>
        <position position="160"/>
    </location>
</feature>
<feature type="mutagenesis site" description="Completely inactive." evidence="3">
    <original>D</original>
    <variation>A</variation>
    <location>
        <position position="161"/>
    </location>
</feature>
<feature type="mutagenesis site" description="No influence on aminopropyltransferase activity." evidence="3">
    <original>P</original>
    <variation>A</variation>
    <location>
        <position position="162"/>
    </location>
</feature>
<feature type="mutagenesis site" description="No influence on aminopropyltransferase activity." evidence="3">
    <original>I</original>
    <variation>A</variation>
    <location>
        <position position="163"/>
    </location>
</feature>
<feature type="mutagenesis site" description="Reduction of aminopropyltransferase activity." evidence="3">
    <original>P</original>
    <variation>A</variation>
    <location>
        <position position="165"/>
    </location>
</feature>
<feature type="strand" evidence="13">
    <location>
        <begin position="5"/>
        <end position="8"/>
    </location>
</feature>
<feature type="strand" evidence="13">
    <location>
        <begin position="11"/>
        <end position="28"/>
    </location>
</feature>
<feature type="strand" evidence="13">
    <location>
        <begin position="30"/>
        <end position="32"/>
    </location>
</feature>
<feature type="strand" evidence="13">
    <location>
        <begin position="35"/>
        <end position="40"/>
    </location>
</feature>
<feature type="turn" evidence="13">
    <location>
        <begin position="41"/>
        <end position="43"/>
    </location>
</feature>
<feature type="strand" evidence="13">
    <location>
        <begin position="44"/>
        <end position="49"/>
    </location>
</feature>
<feature type="strand" evidence="13">
    <location>
        <begin position="52"/>
        <end position="56"/>
    </location>
</feature>
<feature type="turn" evidence="13">
    <location>
        <begin position="57"/>
        <end position="59"/>
    </location>
</feature>
<feature type="helix" evidence="13">
    <location>
        <begin position="60"/>
        <end position="74"/>
    </location>
</feature>
<feature type="strand" evidence="13">
    <location>
        <begin position="80"/>
        <end position="85"/>
    </location>
</feature>
<feature type="helix" evidence="13">
    <location>
        <begin position="90"/>
        <end position="96"/>
    </location>
</feature>
<feature type="strand" evidence="13">
    <location>
        <begin position="103"/>
        <end position="109"/>
    </location>
</feature>
<feature type="helix" evidence="13">
    <location>
        <begin position="111"/>
        <end position="120"/>
    </location>
</feature>
<feature type="helix" evidence="13">
    <location>
        <begin position="122"/>
        <end position="125"/>
    </location>
</feature>
<feature type="helix" evidence="13">
    <location>
        <begin position="128"/>
        <end position="130"/>
    </location>
</feature>
<feature type="strand" evidence="13">
    <location>
        <begin position="134"/>
        <end position="139"/>
    </location>
</feature>
<feature type="turn" evidence="13">
    <location>
        <begin position="141"/>
        <end position="145"/>
    </location>
</feature>
<feature type="strand" evidence="13">
    <location>
        <begin position="152"/>
        <end position="158"/>
    </location>
</feature>
<feature type="helix" evidence="13">
    <location>
        <begin position="173"/>
        <end position="180"/>
    </location>
</feature>
<feature type="strand" evidence="13">
    <location>
        <begin position="182"/>
        <end position="197"/>
    </location>
</feature>
<feature type="helix" evidence="13">
    <location>
        <begin position="200"/>
        <end position="212"/>
    </location>
</feature>
<feature type="strand" evidence="13">
    <location>
        <begin position="214"/>
        <end position="221"/>
    </location>
</feature>
<feature type="strand" evidence="13">
    <location>
        <begin position="226"/>
        <end position="229"/>
    </location>
</feature>
<feature type="strand" evidence="13">
    <location>
        <begin position="231"/>
        <end position="238"/>
    </location>
</feature>
<feature type="helix" evidence="13">
    <location>
        <begin position="242"/>
        <end position="244"/>
    </location>
</feature>
<feature type="helix" evidence="13">
    <location>
        <begin position="247"/>
        <end position="255"/>
    </location>
</feature>
<feature type="helix" evidence="13">
    <location>
        <begin position="266"/>
        <end position="272"/>
    </location>
</feature>
<feature type="helix" evidence="13">
    <location>
        <begin position="277"/>
        <end position="282"/>
    </location>
</feature>
<evidence type="ECO:0000255" key="1">
    <source>
        <dbReference type="HAMAP-Rule" id="MF_00198"/>
    </source>
</evidence>
<evidence type="ECO:0000269" key="2">
    <source>
    </source>
</evidence>
<evidence type="ECO:0000269" key="3">
    <source>
    </source>
</evidence>
<evidence type="ECO:0000269" key="4">
    <source>
    </source>
</evidence>
<evidence type="ECO:0000269" key="5">
    <source>
    </source>
</evidence>
<evidence type="ECO:0000269" key="6">
    <source>
    </source>
</evidence>
<evidence type="ECO:0000269" key="7">
    <source>
    </source>
</evidence>
<evidence type="ECO:0000269" key="8">
    <source>
    </source>
</evidence>
<evidence type="ECO:0000303" key="9">
    <source>
    </source>
</evidence>
<evidence type="ECO:0000303" key="10">
    <source>
    </source>
</evidence>
<evidence type="ECO:0000305" key="11">
    <source>
    </source>
</evidence>
<evidence type="ECO:0000305" key="12">
    <source>
    </source>
</evidence>
<evidence type="ECO:0007829" key="13">
    <source>
        <dbReference type="PDB" id="3O4F"/>
    </source>
</evidence>
<reference key="1">
    <citation type="journal article" date="1987" name="J. Biol. Chem.">
        <title>The speEspeD operon of Escherichia coli. Formation and processing of a proenzyme form of S-adenosylmethionine decarboxylase.</title>
        <authorList>
            <person name="Tabor C.W."/>
            <person name="Tabor H."/>
        </authorList>
    </citation>
    <scope>NUCLEOTIDE SEQUENCE [GENOMIC DNA]</scope>
</reference>
<reference key="2">
    <citation type="journal article" date="1994" name="Nucleic Acids Res.">
        <title>Systematic sequencing of the Escherichia coli genome: analysis of the 2.4-4.1 min (110,917-193,643 bp) region.</title>
        <authorList>
            <person name="Fujita N."/>
            <person name="Mori H."/>
            <person name="Yura T."/>
            <person name="Ishihama A."/>
        </authorList>
    </citation>
    <scope>NUCLEOTIDE SEQUENCE [LARGE SCALE GENOMIC DNA]</scope>
    <source>
        <strain>K12 / W3110 / ATCC 27325 / DSM 5911</strain>
    </source>
</reference>
<reference key="3">
    <citation type="journal article" date="1997" name="Science">
        <title>The complete genome sequence of Escherichia coli K-12.</title>
        <authorList>
            <person name="Blattner F.R."/>
            <person name="Plunkett G. III"/>
            <person name="Bloch C.A."/>
            <person name="Perna N.T."/>
            <person name="Burland V."/>
            <person name="Riley M."/>
            <person name="Collado-Vides J."/>
            <person name="Glasner J.D."/>
            <person name="Rode C.K."/>
            <person name="Mayhew G.F."/>
            <person name="Gregor J."/>
            <person name="Davis N.W."/>
            <person name="Kirkpatrick H.A."/>
            <person name="Goeden M.A."/>
            <person name="Rose D.J."/>
            <person name="Mau B."/>
            <person name="Shao Y."/>
        </authorList>
    </citation>
    <scope>NUCLEOTIDE SEQUENCE [LARGE SCALE GENOMIC DNA]</scope>
    <source>
        <strain>K12 / MG1655 / ATCC 47076</strain>
    </source>
</reference>
<reference key="4">
    <citation type="journal article" date="2006" name="Mol. Syst. Biol.">
        <title>Highly accurate genome sequences of Escherichia coli K-12 strains MG1655 and W3110.</title>
        <authorList>
            <person name="Hayashi K."/>
            <person name="Morooka N."/>
            <person name="Yamamoto Y."/>
            <person name="Fujita K."/>
            <person name="Isono K."/>
            <person name="Choi S."/>
            <person name="Ohtsubo E."/>
            <person name="Baba T."/>
            <person name="Wanner B.L."/>
            <person name="Mori H."/>
            <person name="Horiuchi T."/>
        </authorList>
    </citation>
    <scope>NUCLEOTIDE SEQUENCE [LARGE SCALE GENOMIC DNA]</scope>
    <source>
        <strain>K12 / W3110 / ATCC 27325 / DSM 5911</strain>
    </source>
</reference>
<reference key="5">
    <citation type="journal article" date="1989" name="J. Bacteriol.">
        <title>Spermidine biosynthesis in Escherichia coli: promoter and termination regions of the speED operon.</title>
        <authorList>
            <person name="Xie Q.W."/>
            <person name="Tabor C.W."/>
            <person name="Tabor H."/>
        </authorList>
    </citation>
    <scope>NUCLEOTIDE SEQUENCE [GENOMIC DNA] OF 1-18</scope>
</reference>
<reference key="6">
    <citation type="journal article" date="1986" name="Proc. Natl. Acad. Sci. U.S.A.">
        <title>Spermidine synthase of Escherichia coli: localization of the speE gene.</title>
        <authorList>
            <person name="Tabor C.W."/>
            <person name="Tabor H."/>
            <person name="Xie Q.W."/>
        </authorList>
    </citation>
    <scope>PROTEIN SEQUENCE OF 2-31</scope>
</reference>
<reference key="7">
    <citation type="journal article" date="1973" name="J. Biol. Chem.">
        <title>Spermidine biosynthesis. Purification and properties of propylamine transferase from Escherichia coli.</title>
        <authorList>
            <person name="Bowman W.H."/>
            <person name="Tabor C.W."/>
            <person name="Tabor H."/>
        </authorList>
    </citation>
    <scope>FUNCTION</scope>
    <scope>CATALYTIC ACTIVITY</scope>
    <scope>BIOPHYSICOCHEMICAL PROPERTIES</scope>
    <scope>ACTIVITY REGULATION</scope>
    <scope>SUBSTRATE SPECIFICITY</scope>
    <scope>SUBUNIT</scope>
</reference>
<reference key="8">
    <citation type="journal article" date="1980" name="J. Biol. Chem.">
        <title>Mechanism of propylamine-transfer reactions. Kinetic and inhibition studies on spermidine synthase from Escherichia coli.</title>
        <authorList>
            <person name="Zappia V."/>
            <person name="Cacciapuoti G."/>
            <person name="Pontoni G."/>
            <person name="Oliva A."/>
        </authorList>
    </citation>
    <scope>ACTIVITY REGULATION</scope>
    <scope>REACTION MECHANISM</scope>
</reference>
<reference key="9">
    <citation type="journal article" date="1983" name="FEBS Lett.">
        <title>Inhibition of bacterial aminopropyltransferases by S-adenosyl-1,8-diamino-3-thiooctane and by dicyclohexylamine.</title>
        <authorList>
            <person name="Pegg A.E."/>
            <person name="Bitonti A.J."/>
            <person name="McCann P.P."/>
            <person name="Coward J.K."/>
        </authorList>
    </citation>
    <scope>ACTIVITY REGULATION</scope>
</reference>
<reference key="10">
    <citation type="journal article" date="1984" name="Biochem. J.">
        <title>Reversible inhibition of bacterial growth after specific inhibition of spermidine synthase by dicyclohexylamine.</title>
        <authorList>
            <person name="Mattila T."/>
            <person name="Honkanen-Buzalski T."/>
            <person name="Poso H."/>
        </authorList>
    </citation>
    <scope>ACTIVITY REGULATION</scope>
</reference>
<reference key="11">
    <citation type="journal article" date="2013" name="Mol. Biotechnol.">
        <title>Site-directed mutations of the gatekeeping loop region affect the activity of Escherichia coli spermidine synthase.</title>
        <authorList>
            <person name="Lee M.J."/>
            <person name="Yang Y.T."/>
            <person name="Lin V."/>
            <person name="Huang H."/>
        </authorList>
    </citation>
    <scope>FUNCTION</scope>
    <scope>CATALYTIC ACTIVITY</scope>
    <scope>MUTAGENESIS OF ASP-158; CYS-159; THR-160; ASP-161; PRO-162; ILE-163 AND PRO-165</scope>
    <scope>ACTIVE SITE</scope>
    <scope>BIOPHYSICOCHEMICAL PROPERTIES</scope>
    <scope>MASS SPECTROMETRY</scope>
    <scope>REACTION MECHANISM</scope>
    <source>
        <strain>K12 / MG1655 / ATCC 47076</strain>
    </source>
</reference>
<reference key="12">
    <citation type="journal article" date="2010" name="J. Struct. Biol.">
        <title>The crystal structure of Escherichia coli spermidine synthase SpeE reveals a unique substrate-binding pocket.</title>
        <authorList>
            <person name="Zhou X."/>
            <person name="Chua T.K."/>
            <person name="Tkaczuk K.L."/>
            <person name="Bujnicki J.M."/>
            <person name="Sivaraman J."/>
        </authorList>
    </citation>
    <scope>X-RAY CRYSTALLOGRAPHY (2.9 ANGSTROMS)</scope>
    <scope>SUBUNIT</scope>
</reference>
<gene>
    <name evidence="1 9" type="primary">speE</name>
    <name type="ordered locus">b0121</name>
    <name type="ordered locus">JW0117</name>
</gene>
<keyword id="KW-0002">3D-structure</keyword>
<keyword id="KW-0963">Cytoplasm</keyword>
<keyword id="KW-0903">Direct protein sequencing</keyword>
<keyword id="KW-0620">Polyamine biosynthesis</keyword>
<keyword id="KW-1185">Reference proteome</keyword>
<keyword id="KW-0745">Spermidine biosynthesis</keyword>
<keyword id="KW-0808">Transferase</keyword>
<protein>
    <recommendedName>
        <fullName evidence="1 10">Polyamine aminopropyltransferase</fullName>
    </recommendedName>
    <alternativeName>
        <fullName evidence="12">Cadaverine aminopropyltransferase</fullName>
        <ecNumber evidence="5">2.5.1.-</ecNumber>
    </alternativeName>
    <alternativeName>
        <fullName evidence="1 12">Putrescine aminopropyltransferase</fullName>
        <shortName evidence="1">PAPT</shortName>
    </alternativeName>
    <alternativeName>
        <fullName evidence="12">Spermidine aminopropyltransferase</fullName>
        <ecNumber evidence="5">2.5.1.79</ecNumber>
    </alternativeName>
    <alternativeName>
        <fullName evidence="1 10">Spermidine synthase</fullName>
        <shortName evidence="1 10">SPDS</shortName>
        <shortName evidence="1 10">SPDSY</shortName>
        <ecNumber evidence="1 3 5">2.5.1.16</ecNumber>
    </alternativeName>
    <alternativeName>
        <fullName evidence="10">Spermine synthase</fullName>
        <ecNumber evidence="5">2.5.1.22</ecNumber>
    </alternativeName>
    <alternativeName>
        <fullName evidence="12">Thermospermine synthase</fullName>
    </alternativeName>
</protein>
<sequence>MAEKKQWHETLHDQFGQYFAVDNVLYHEKTDHQDLIIFENAAFGRVMALDGVVQTTERDEFIYHEMMTHVPLLAHGHAKHVLIIGGGDGAMLREVTRHKNVESITMVEIDAGVVSFCRQYLPNHNAGSYDDPRFKLVIDDGVNFVNQTSQTFDVIISDCTDPIGPGESLFTSAFYEGCKRCLNPGGIFVAQNGVCFLQQEEAIDSHRKLSHYFSDVGFYQAAIPTYYGGIMTFAWATDNDALRHLSTEIIQARFLASGLKCRYYNPAIHTAAFALPQYLQDALASQPS</sequence>
<organism>
    <name type="scientific">Escherichia coli (strain K12)</name>
    <dbReference type="NCBI Taxonomy" id="83333"/>
    <lineage>
        <taxon>Bacteria</taxon>
        <taxon>Pseudomonadati</taxon>
        <taxon>Pseudomonadota</taxon>
        <taxon>Gammaproteobacteria</taxon>
        <taxon>Enterobacterales</taxon>
        <taxon>Enterobacteriaceae</taxon>
        <taxon>Escherichia</taxon>
    </lineage>
</organism>
<dbReference type="EC" id="2.5.1.-" evidence="5"/>
<dbReference type="EC" id="2.5.1.79" evidence="5"/>
<dbReference type="EC" id="2.5.1.16" evidence="1 3 5"/>
<dbReference type="EC" id="2.5.1.22" evidence="5"/>
<dbReference type="EMBL" id="J02804">
    <property type="protein sequence ID" value="AAA24643.1"/>
    <property type="molecule type" value="Genomic_DNA"/>
</dbReference>
<dbReference type="EMBL" id="U00096">
    <property type="protein sequence ID" value="AAC73232.1"/>
    <property type="molecule type" value="Genomic_DNA"/>
</dbReference>
<dbReference type="EMBL" id="AP009048">
    <property type="protein sequence ID" value="BAB96695.1"/>
    <property type="molecule type" value="Genomic_DNA"/>
</dbReference>
<dbReference type="PIR" id="A29778">
    <property type="entry name" value="SYECSD"/>
</dbReference>
<dbReference type="RefSeq" id="NP_414663.1">
    <property type="nucleotide sequence ID" value="NC_000913.3"/>
</dbReference>
<dbReference type="RefSeq" id="WP_000818411.1">
    <property type="nucleotide sequence ID" value="NZ_STEB01000010.1"/>
</dbReference>
<dbReference type="PDB" id="3O4F">
    <property type="method" value="X-ray"/>
    <property type="resolution" value="2.90 A"/>
    <property type="chains" value="A/B/C/D/E/F/G/H=1-288"/>
</dbReference>
<dbReference type="PDBsum" id="3O4F"/>
<dbReference type="SMR" id="P09158"/>
<dbReference type="BioGRID" id="4262092">
    <property type="interactions" value="273"/>
</dbReference>
<dbReference type="BioGRID" id="852039">
    <property type="interactions" value="1"/>
</dbReference>
<dbReference type="FunCoup" id="P09158">
    <property type="interactions" value="663"/>
</dbReference>
<dbReference type="IntAct" id="P09158">
    <property type="interactions" value="11"/>
</dbReference>
<dbReference type="STRING" id="511145.b0121"/>
<dbReference type="jPOST" id="P09158"/>
<dbReference type="PaxDb" id="511145-b0121"/>
<dbReference type="EnsemblBacteria" id="AAC73232">
    <property type="protein sequence ID" value="AAC73232"/>
    <property type="gene ID" value="b0121"/>
</dbReference>
<dbReference type="GeneID" id="75202064"/>
<dbReference type="GeneID" id="947726"/>
<dbReference type="KEGG" id="ecj:JW0117"/>
<dbReference type="KEGG" id="eco:b0121"/>
<dbReference type="KEGG" id="ecoc:C3026_00510"/>
<dbReference type="PATRIC" id="fig|1411691.4.peg.2161"/>
<dbReference type="EchoBASE" id="EB0956"/>
<dbReference type="eggNOG" id="COG0421">
    <property type="taxonomic scope" value="Bacteria"/>
</dbReference>
<dbReference type="HOGENOM" id="CLU_048199_0_0_6"/>
<dbReference type="InParanoid" id="P09158"/>
<dbReference type="OMA" id="FLYHEMM"/>
<dbReference type="OrthoDB" id="9793120at2"/>
<dbReference type="PhylomeDB" id="P09158"/>
<dbReference type="BioCyc" id="EcoCyc:SPERMIDINESYN-MONOMER"/>
<dbReference type="BioCyc" id="MetaCyc:SPERMIDINESYN-MONOMER"/>
<dbReference type="BRENDA" id="2.5.1.16">
    <property type="organism ID" value="2026"/>
</dbReference>
<dbReference type="UniPathway" id="UPA00248">
    <property type="reaction ID" value="UER00314"/>
</dbReference>
<dbReference type="EvolutionaryTrace" id="P09158"/>
<dbReference type="PHI-base" id="PHI:9153"/>
<dbReference type="PRO" id="PR:P09158"/>
<dbReference type="Proteomes" id="UP000000625">
    <property type="component" value="Chromosome"/>
</dbReference>
<dbReference type="GO" id="GO:0005829">
    <property type="term" value="C:cytosol"/>
    <property type="evidence" value="ECO:0000314"/>
    <property type="project" value="EcoCyc"/>
</dbReference>
<dbReference type="GO" id="GO:0043918">
    <property type="term" value="F:cadaverine aminopropyltransferase activity"/>
    <property type="evidence" value="ECO:0000314"/>
    <property type="project" value="UniProtKB"/>
</dbReference>
<dbReference type="GO" id="GO:0042803">
    <property type="term" value="F:protein homodimerization activity"/>
    <property type="evidence" value="ECO:0000314"/>
    <property type="project" value="EcoCyc"/>
</dbReference>
<dbReference type="GO" id="GO:0004766">
    <property type="term" value="F:spermidine synthase activity"/>
    <property type="evidence" value="ECO:0000314"/>
    <property type="project" value="EcoCyc"/>
</dbReference>
<dbReference type="GO" id="GO:0016768">
    <property type="term" value="F:spermine synthase activity"/>
    <property type="evidence" value="ECO:0007669"/>
    <property type="project" value="UniProtKB-EC"/>
</dbReference>
<dbReference type="GO" id="GO:0010487">
    <property type="term" value="F:thermospermine synthase activity"/>
    <property type="evidence" value="ECO:0000314"/>
    <property type="project" value="UniProtKB"/>
</dbReference>
<dbReference type="GO" id="GO:0008295">
    <property type="term" value="P:spermidine biosynthetic process"/>
    <property type="evidence" value="ECO:0000315"/>
    <property type="project" value="EcoCyc"/>
</dbReference>
<dbReference type="CDD" id="cd02440">
    <property type="entry name" value="AdoMet_MTases"/>
    <property type="match status" value="1"/>
</dbReference>
<dbReference type="FunFam" id="2.30.140.10:FF:000002">
    <property type="entry name" value="Polyamine aminopropyltransferase"/>
    <property type="match status" value="1"/>
</dbReference>
<dbReference type="FunFam" id="3.40.50.150:FF:000026">
    <property type="entry name" value="Polyamine aminopropyltransferase"/>
    <property type="match status" value="1"/>
</dbReference>
<dbReference type="Gene3D" id="2.30.140.10">
    <property type="entry name" value="Spermidine synthase, tetramerisation domain"/>
    <property type="match status" value="1"/>
</dbReference>
<dbReference type="Gene3D" id="3.40.50.150">
    <property type="entry name" value="Vaccinia Virus protein VP39"/>
    <property type="match status" value="1"/>
</dbReference>
<dbReference type="HAMAP" id="MF_00198">
    <property type="entry name" value="Spermidine_synth"/>
    <property type="match status" value="1"/>
</dbReference>
<dbReference type="InterPro" id="IPR030374">
    <property type="entry name" value="PABS"/>
</dbReference>
<dbReference type="InterPro" id="IPR030373">
    <property type="entry name" value="PABS_CS"/>
</dbReference>
<dbReference type="InterPro" id="IPR029063">
    <property type="entry name" value="SAM-dependent_MTases_sf"/>
</dbReference>
<dbReference type="InterPro" id="IPR001045">
    <property type="entry name" value="Spermi_synthase"/>
</dbReference>
<dbReference type="InterPro" id="IPR035246">
    <property type="entry name" value="Spermidine_synt_N"/>
</dbReference>
<dbReference type="InterPro" id="IPR037163">
    <property type="entry name" value="Spermidine_synt_N_sf"/>
</dbReference>
<dbReference type="NCBIfam" id="NF037959">
    <property type="entry name" value="MFS_SpdSyn"/>
    <property type="match status" value="1"/>
</dbReference>
<dbReference type="NCBIfam" id="NF002010">
    <property type="entry name" value="PRK00811.1"/>
    <property type="match status" value="1"/>
</dbReference>
<dbReference type="NCBIfam" id="TIGR00417">
    <property type="entry name" value="speE"/>
    <property type="match status" value="1"/>
</dbReference>
<dbReference type="PANTHER" id="PTHR11558:SF11">
    <property type="entry name" value="SPERMIDINE SYNTHASE"/>
    <property type="match status" value="1"/>
</dbReference>
<dbReference type="PANTHER" id="PTHR11558">
    <property type="entry name" value="SPERMIDINE/SPERMINE SYNTHASE"/>
    <property type="match status" value="1"/>
</dbReference>
<dbReference type="Pfam" id="PF17284">
    <property type="entry name" value="Spermine_synt_N"/>
    <property type="match status" value="1"/>
</dbReference>
<dbReference type="Pfam" id="PF01564">
    <property type="entry name" value="Spermine_synth"/>
    <property type="match status" value="1"/>
</dbReference>
<dbReference type="SUPFAM" id="SSF53335">
    <property type="entry name" value="S-adenosyl-L-methionine-dependent methyltransferases"/>
    <property type="match status" value="1"/>
</dbReference>
<dbReference type="PROSITE" id="PS01330">
    <property type="entry name" value="PABS_1"/>
    <property type="match status" value="1"/>
</dbReference>
<dbReference type="PROSITE" id="PS51006">
    <property type="entry name" value="PABS_2"/>
    <property type="match status" value="1"/>
</dbReference>
<comment type="function">
    <text evidence="3 5">Involved in the biosynthesis of polyamines which play a significant role in the structural and functional organization in the chromoid of E.coli by compacting DNA and neutralizing negative charges. Catalyzes the irreversible transfer (ping-pong mechanism) of a propylamine group from the amino donor S-adenosylmethioninamine (decarboxy-AdoMet) to putrescine (1,4-diaminobutane) to yield spermidine. Cadaverine (1,5-diaminopentane) and spermidine can also be used as the propylamine acceptor.</text>
</comment>
<comment type="catalytic activity">
    <reaction evidence="1 3 5">
        <text>S-adenosyl 3-(methylsulfanyl)propylamine + putrescine = S-methyl-5'-thioadenosine + spermidine + H(+)</text>
        <dbReference type="Rhea" id="RHEA:12721"/>
        <dbReference type="ChEBI" id="CHEBI:15378"/>
        <dbReference type="ChEBI" id="CHEBI:17509"/>
        <dbReference type="ChEBI" id="CHEBI:57443"/>
        <dbReference type="ChEBI" id="CHEBI:57834"/>
        <dbReference type="ChEBI" id="CHEBI:326268"/>
        <dbReference type="EC" id="2.5.1.16"/>
    </reaction>
</comment>
<comment type="catalytic activity">
    <reaction evidence="5">
        <text>S-adenosyl 3-(methylsulfanyl)propylamine + spermidine = spermine + S-methyl-5'-thioadenosine + H(+)</text>
        <dbReference type="Rhea" id="RHEA:19973"/>
        <dbReference type="ChEBI" id="CHEBI:15378"/>
        <dbReference type="ChEBI" id="CHEBI:17509"/>
        <dbReference type="ChEBI" id="CHEBI:45725"/>
        <dbReference type="ChEBI" id="CHEBI:57443"/>
        <dbReference type="ChEBI" id="CHEBI:57834"/>
        <dbReference type="EC" id="2.5.1.22"/>
    </reaction>
</comment>
<comment type="catalytic activity">
    <reaction evidence="5">
        <text>cadaverine + S-adenosyl 3-(methylsulfanyl)propylamine = aminopropylcadaverine + S-methyl-5'-thioadenosine + H(+)</text>
        <dbReference type="Rhea" id="RHEA:33387"/>
        <dbReference type="ChEBI" id="CHEBI:15378"/>
        <dbReference type="ChEBI" id="CHEBI:17509"/>
        <dbReference type="ChEBI" id="CHEBI:57443"/>
        <dbReference type="ChEBI" id="CHEBI:58384"/>
        <dbReference type="ChEBI" id="CHEBI:64858"/>
    </reaction>
</comment>
<comment type="catalytic activity">
    <reaction evidence="5">
        <text>S-adenosyl 3-(methylsulfanyl)propylamine + spermidine = thermospermine + S-methyl-5'-thioadenosine + H(+)</text>
        <dbReference type="Rhea" id="RHEA:30515"/>
        <dbReference type="ChEBI" id="CHEBI:15378"/>
        <dbReference type="ChEBI" id="CHEBI:17509"/>
        <dbReference type="ChEBI" id="CHEBI:57443"/>
        <dbReference type="ChEBI" id="CHEBI:57834"/>
        <dbReference type="ChEBI" id="CHEBI:59903"/>
        <dbReference type="EC" id="2.5.1.79"/>
    </reaction>
</comment>
<comment type="activity regulation">
    <text evidence="5 6 7 8">The activity is thought to be regulated mainly by the availability of decarboxylated S-adenosylmethionine. Inhibited by dicyclohexylamine, S-adenosyl-1,8-diamino-3-thiooctane (AdoDATO), sulfonium-deaminated analogs of S-adenosyl(5')-3-methylthiopropylamine, p-hydroxymercuribenzoate and N-ethylmaleimide.</text>
</comment>
<comment type="biophysicochemical properties">
    <kinetics>
        <KM evidence="5">2.2 uM for S-adenosylmethionine</KM>
        <KM evidence="5">12 uM for putrescine</KM>
        <KM evidence="3">77.77 uM for putrescine (at pH 7.5 and 37 degrees Celsius)</KM>
        <KM evidence="3">84.98 uM for S-adenosylmethionine (at pH 7.5 and 37 degrees Celsius)</KM>
        <Vmax evidence="5">2.0 umol/min/mg enzyme</Vmax>
        <Vmax evidence="3">0.56 umol/min/mg enzyme (at pH 7.5 and 37 degrees Celsius)</Vmax>
    </kinetics>
    <phDependence>
        <text evidence="3">Optimum pH is 7.5.</text>
    </phDependence>
    <temperatureDependence>
        <text evidence="3">Optimum temperature is 50 degrees Celsius.</text>
    </temperatureDependence>
</comment>
<comment type="pathway">
    <text evidence="1">Amine and polyamine biosynthesis; spermidine biosynthesis; spermidine from putrescine: step 1/1.</text>
</comment>
<comment type="subunit">
    <text evidence="2 5">Homodimer.</text>
</comment>
<comment type="subcellular location">
    <subcellularLocation>
        <location evidence="1">Cytoplasm</location>
    </subcellularLocation>
</comment>
<comment type="mass spectrometry"/>
<comment type="similarity">
    <text evidence="1">Belongs to the spermidine/spermine synthase family.</text>
</comment>
<accession>P09158</accession>
<name>SPEE_ECOLI</name>
<proteinExistence type="evidence at protein level"/>